<evidence type="ECO:0000255" key="1">
    <source>
        <dbReference type="HAMAP-Rule" id="MF_00206"/>
    </source>
</evidence>
<evidence type="ECO:0000255" key="2">
    <source>
        <dbReference type="PROSITE-ProRule" id="PRU01266"/>
    </source>
</evidence>
<reference key="1">
    <citation type="journal article" date="2000" name="Proc. Natl. Acad. Sci. U.S.A.">
        <title>Genome sequence of Halobacterium species NRC-1.</title>
        <authorList>
            <person name="Ng W.V."/>
            <person name="Kennedy S.P."/>
            <person name="Mahairas G.G."/>
            <person name="Berquist B."/>
            <person name="Pan M."/>
            <person name="Shukla H.D."/>
            <person name="Lasky S.R."/>
            <person name="Baliga N.S."/>
            <person name="Thorsson V."/>
            <person name="Sbrogna J."/>
            <person name="Swartzell S."/>
            <person name="Weir D."/>
            <person name="Hall J."/>
            <person name="Dahl T.A."/>
            <person name="Welti R."/>
            <person name="Goo Y.A."/>
            <person name="Leithauser B."/>
            <person name="Keller K."/>
            <person name="Cruz R."/>
            <person name="Danson M.J."/>
            <person name="Hough D.W."/>
            <person name="Maddocks D.G."/>
            <person name="Jablonski P.E."/>
            <person name="Krebs M.P."/>
            <person name="Angevine C.M."/>
            <person name="Dale H."/>
            <person name="Isenbarger T.A."/>
            <person name="Peck R.F."/>
            <person name="Pohlschroder M."/>
            <person name="Spudich J.L."/>
            <person name="Jung K.-H."/>
            <person name="Alam M."/>
            <person name="Freitas T."/>
            <person name="Hou S."/>
            <person name="Daniels C.J."/>
            <person name="Dennis P.P."/>
            <person name="Omer A.D."/>
            <person name="Ebhardt H."/>
            <person name="Lowe T.M."/>
            <person name="Liang P."/>
            <person name="Riley M."/>
            <person name="Hood L."/>
            <person name="DasSarma S."/>
        </authorList>
    </citation>
    <scope>NUCLEOTIDE SEQUENCE [LARGE SCALE GENOMIC DNA]</scope>
    <source>
        <strain>ATCC 700922 / JCM 11081 / NRC-1</strain>
    </source>
</reference>
<sequence length="311" mass="34830">MSSRRKPEWLKMRPPSGERFTDIKETLRDNDLHTVCEEASCPNMGECWSGRDGPGTATFMLMGDRCSRGCNFCDVKTGGMEPLDPDEPANVAESVAEIGLDYVVLTSVDRDDLDDQGAGHFARTIREIKERDPSILVEVLIPDFQGEKSLVQKIIDAGPDVIAHNIETVARRQVPVRDRRAGYEQSLSVLEYVTRESDIYTKTSIMLGVGEYDHEVYQTLGDLREAGVDVVTLGQYLQPSRSHLDVADYVHPQKFETWQRVAESEFGFLYCASGPMVRSSYKAGELFVDAVLREGKSVQEARRNARRAASE</sequence>
<dbReference type="EC" id="2.8.1.8" evidence="1"/>
<dbReference type="EMBL" id="AE004437">
    <property type="protein sequence ID" value="AAG20343.1"/>
    <property type="molecule type" value="Genomic_DNA"/>
</dbReference>
<dbReference type="PIR" id="C84372">
    <property type="entry name" value="C84372"/>
</dbReference>
<dbReference type="RefSeq" id="WP_010903644.1">
    <property type="nucleotide sequence ID" value="NC_002607.1"/>
</dbReference>
<dbReference type="SMR" id="Q9HN78"/>
<dbReference type="STRING" id="64091.VNG_2216G"/>
<dbReference type="PaxDb" id="64091-VNG_2216G"/>
<dbReference type="GeneID" id="89350365"/>
<dbReference type="KEGG" id="hal:VNG_2216G"/>
<dbReference type="PATRIC" id="fig|64091.14.peg.1703"/>
<dbReference type="HOGENOM" id="CLU_033144_2_0_2"/>
<dbReference type="InParanoid" id="Q9HN78"/>
<dbReference type="OrthoDB" id="145957at2157"/>
<dbReference type="PhylomeDB" id="Q9HN78"/>
<dbReference type="UniPathway" id="UPA00538">
    <property type="reaction ID" value="UER00593"/>
</dbReference>
<dbReference type="Proteomes" id="UP000000554">
    <property type="component" value="Chromosome"/>
</dbReference>
<dbReference type="GO" id="GO:0005737">
    <property type="term" value="C:cytoplasm"/>
    <property type="evidence" value="ECO:0007669"/>
    <property type="project" value="UniProtKB-SubCell"/>
</dbReference>
<dbReference type="GO" id="GO:0051539">
    <property type="term" value="F:4 iron, 4 sulfur cluster binding"/>
    <property type="evidence" value="ECO:0007669"/>
    <property type="project" value="UniProtKB-UniRule"/>
</dbReference>
<dbReference type="GO" id="GO:0016992">
    <property type="term" value="F:lipoate synthase activity"/>
    <property type="evidence" value="ECO:0007669"/>
    <property type="project" value="UniProtKB-UniRule"/>
</dbReference>
<dbReference type="GO" id="GO:0046872">
    <property type="term" value="F:metal ion binding"/>
    <property type="evidence" value="ECO:0007669"/>
    <property type="project" value="UniProtKB-KW"/>
</dbReference>
<dbReference type="CDD" id="cd01335">
    <property type="entry name" value="Radical_SAM"/>
    <property type="match status" value="1"/>
</dbReference>
<dbReference type="FunFam" id="3.20.20.70:FF:000306">
    <property type="entry name" value="Lipoyl synthase, mitochondrial"/>
    <property type="match status" value="1"/>
</dbReference>
<dbReference type="Gene3D" id="3.20.20.70">
    <property type="entry name" value="Aldolase class I"/>
    <property type="match status" value="1"/>
</dbReference>
<dbReference type="HAMAP" id="MF_00206">
    <property type="entry name" value="Lipoyl_synth"/>
    <property type="match status" value="1"/>
</dbReference>
<dbReference type="InterPro" id="IPR013785">
    <property type="entry name" value="Aldolase_TIM"/>
</dbReference>
<dbReference type="InterPro" id="IPR006638">
    <property type="entry name" value="Elp3/MiaA/NifB-like_rSAM"/>
</dbReference>
<dbReference type="InterPro" id="IPR031691">
    <property type="entry name" value="LIAS_N"/>
</dbReference>
<dbReference type="InterPro" id="IPR003698">
    <property type="entry name" value="Lipoyl_synth"/>
</dbReference>
<dbReference type="InterPro" id="IPR007197">
    <property type="entry name" value="rSAM"/>
</dbReference>
<dbReference type="NCBIfam" id="TIGR00510">
    <property type="entry name" value="lipA"/>
    <property type="match status" value="1"/>
</dbReference>
<dbReference type="NCBIfam" id="NF004019">
    <property type="entry name" value="PRK05481.1"/>
    <property type="match status" value="1"/>
</dbReference>
<dbReference type="NCBIfam" id="NF009544">
    <property type="entry name" value="PRK12928.1"/>
    <property type="match status" value="1"/>
</dbReference>
<dbReference type="PANTHER" id="PTHR10949">
    <property type="entry name" value="LIPOYL SYNTHASE"/>
    <property type="match status" value="1"/>
</dbReference>
<dbReference type="PANTHER" id="PTHR10949:SF0">
    <property type="entry name" value="LIPOYL SYNTHASE, MITOCHONDRIAL"/>
    <property type="match status" value="1"/>
</dbReference>
<dbReference type="Pfam" id="PF16881">
    <property type="entry name" value="LIAS_N"/>
    <property type="match status" value="1"/>
</dbReference>
<dbReference type="Pfam" id="PF04055">
    <property type="entry name" value="Radical_SAM"/>
    <property type="match status" value="1"/>
</dbReference>
<dbReference type="PIRSF" id="PIRSF005963">
    <property type="entry name" value="Lipoyl_synth"/>
    <property type="match status" value="1"/>
</dbReference>
<dbReference type="SFLD" id="SFLDF00271">
    <property type="entry name" value="lipoyl_synthase"/>
    <property type="match status" value="1"/>
</dbReference>
<dbReference type="SFLD" id="SFLDS00029">
    <property type="entry name" value="Radical_SAM"/>
    <property type="match status" value="1"/>
</dbReference>
<dbReference type="SMART" id="SM00729">
    <property type="entry name" value="Elp3"/>
    <property type="match status" value="1"/>
</dbReference>
<dbReference type="SUPFAM" id="SSF102114">
    <property type="entry name" value="Radical SAM enzymes"/>
    <property type="match status" value="1"/>
</dbReference>
<dbReference type="PROSITE" id="PS51918">
    <property type="entry name" value="RADICAL_SAM"/>
    <property type="match status" value="1"/>
</dbReference>
<name>LIPA_HALSA</name>
<organism>
    <name type="scientific">Halobacterium salinarum (strain ATCC 700922 / JCM 11081 / NRC-1)</name>
    <name type="common">Halobacterium halobium</name>
    <dbReference type="NCBI Taxonomy" id="64091"/>
    <lineage>
        <taxon>Archaea</taxon>
        <taxon>Methanobacteriati</taxon>
        <taxon>Methanobacteriota</taxon>
        <taxon>Stenosarchaea group</taxon>
        <taxon>Halobacteria</taxon>
        <taxon>Halobacteriales</taxon>
        <taxon>Halobacteriaceae</taxon>
        <taxon>Halobacterium</taxon>
        <taxon>Halobacterium salinarum NRC-34001</taxon>
    </lineage>
</organism>
<protein>
    <recommendedName>
        <fullName evidence="1">Lipoyl synthase</fullName>
        <ecNumber evidence="1">2.8.1.8</ecNumber>
    </recommendedName>
    <alternativeName>
        <fullName evidence="1">Lip-syn</fullName>
        <shortName evidence="1">LS</shortName>
    </alternativeName>
    <alternativeName>
        <fullName evidence="1">Lipoate synthase</fullName>
    </alternativeName>
    <alternativeName>
        <fullName evidence="1">Lipoic acid synthase</fullName>
    </alternativeName>
    <alternativeName>
        <fullName evidence="1">Sulfur insertion protein LipA</fullName>
    </alternativeName>
</protein>
<comment type="function">
    <text evidence="1">Catalyzes the radical-mediated insertion of two sulfur atoms into the C-6 and C-8 positions of the octanoyl moiety bound to the lipoyl domains of lipoate-dependent enzymes, thereby converting the octanoylated domains into lipoylated derivatives.</text>
</comment>
<comment type="catalytic activity">
    <reaction evidence="1">
        <text>[[Fe-S] cluster scaffold protein carrying a second [4Fe-4S](2+) cluster] + N(6)-octanoyl-L-lysyl-[protein] + 2 oxidized [2Fe-2S]-[ferredoxin] + 2 S-adenosyl-L-methionine + 4 H(+) = [[Fe-S] cluster scaffold protein] + N(6)-[(R)-dihydrolipoyl]-L-lysyl-[protein] + 4 Fe(3+) + 2 hydrogen sulfide + 2 5'-deoxyadenosine + 2 L-methionine + 2 reduced [2Fe-2S]-[ferredoxin]</text>
        <dbReference type="Rhea" id="RHEA:16585"/>
        <dbReference type="Rhea" id="RHEA-COMP:9928"/>
        <dbReference type="Rhea" id="RHEA-COMP:10000"/>
        <dbReference type="Rhea" id="RHEA-COMP:10001"/>
        <dbReference type="Rhea" id="RHEA-COMP:10475"/>
        <dbReference type="Rhea" id="RHEA-COMP:14568"/>
        <dbReference type="Rhea" id="RHEA-COMP:14569"/>
        <dbReference type="ChEBI" id="CHEBI:15378"/>
        <dbReference type="ChEBI" id="CHEBI:17319"/>
        <dbReference type="ChEBI" id="CHEBI:29034"/>
        <dbReference type="ChEBI" id="CHEBI:29919"/>
        <dbReference type="ChEBI" id="CHEBI:33722"/>
        <dbReference type="ChEBI" id="CHEBI:33737"/>
        <dbReference type="ChEBI" id="CHEBI:33738"/>
        <dbReference type="ChEBI" id="CHEBI:57844"/>
        <dbReference type="ChEBI" id="CHEBI:59789"/>
        <dbReference type="ChEBI" id="CHEBI:78809"/>
        <dbReference type="ChEBI" id="CHEBI:83100"/>
        <dbReference type="EC" id="2.8.1.8"/>
    </reaction>
</comment>
<comment type="cofactor">
    <cofactor evidence="1">
        <name>[4Fe-4S] cluster</name>
        <dbReference type="ChEBI" id="CHEBI:49883"/>
    </cofactor>
    <text evidence="1">Binds 2 [4Fe-4S] clusters per subunit. One cluster is coordinated with 3 cysteines and an exchangeable S-adenosyl-L-methionine.</text>
</comment>
<comment type="pathway">
    <text evidence="1">Protein modification; protein lipoylation via endogenous pathway; protein N(6)-(lipoyl)lysine from octanoyl-[acyl-carrier-protein]: step 2/2.</text>
</comment>
<comment type="subcellular location">
    <subcellularLocation>
        <location evidence="1">Cytoplasm</location>
    </subcellularLocation>
</comment>
<comment type="similarity">
    <text evidence="1">Belongs to the radical SAM superfamily. Lipoyl synthase family.</text>
</comment>
<accession>Q9HN78</accession>
<proteinExistence type="inferred from homology"/>
<feature type="chain" id="PRO_0000102390" description="Lipoyl synthase">
    <location>
        <begin position="1"/>
        <end position="311"/>
    </location>
</feature>
<feature type="domain" description="Radical SAM core" evidence="2">
    <location>
        <begin position="51"/>
        <end position="269"/>
    </location>
</feature>
<feature type="binding site" evidence="1">
    <location>
        <position position="36"/>
    </location>
    <ligand>
        <name>[4Fe-4S] cluster</name>
        <dbReference type="ChEBI" id="CHEBI:49883"/>
        <label>1</label>
    </ligand>
</feature>
<feature type="binding site" evidence="1">
    <location>
        <position position="41"/>
    </location>
    <ligand>
        <name>[4Fe-4S] cluster</name>
        <dbReference type="ChEBI" id="CHEBI:49883"/>
        <label>1</label>
    </ligand>
</feature>
<feature type="binding site" evidence="1">
    <location>
        <position position="47"/>
    </location>
    <ligand>
        <name>[4Fe-4S] cluster</name>
        <dbReference type="ChEBI" id="CHEBI:49883"/>
        <label>1</label>
    </ligand>
</feature>
<feature type="binding site" evidence="1">
    <location>
        <position position="66"/>
    </location>
    <ligand>
        <name>[4Fe-4S] cluster</name>
        <dbReference type="ChEBI" id="CHEBI:49883"/>
        <label>2</label>
        <note>4Fe-4S-S-AdoMet</note>
    </ligand>
</feature>
<feature type="binding site" evidence="1">
    <location>
        <position position="70"/>
    </location>
    <ligand>
        <name>[4Fe-4S] cluster</name>
        <dbReference type="ChEBI" id="CHEBI:49883"/>
        <label>2</label>
        <note>4Fe-4S-S-AdoMet</note>
    </ligand>
</feature>
<feature type="binding site" evidence="1">
    <location>
        <position position="73"/>
    </location>
    <ligand>
        <name>[4Fe-4S] cluster</name>
        <dbReference type="ChEBI" id="CHEBI:49883"/>
        <label>2</label>
        <note>4Fe-4S-S-AdoMet</note>
    </ligand>
</feature>
<feature type="binding site" evidence="1">
    <location>
        <position position="280"/>
    </location>
    <ligand>
        <name>[4Fe-4S] cluster</name>
        <dbReference type="ChEBI" id="CHEBI:49883"/>
        <label>1</label>
    </ligand>
</feature>
<gene>
    <name evidence="1" type="primary">lipA</name>
    <name type="synonym">lip</name>
    <name type="ordered locus">VNG_2216G</name>
</gene>
<keyword id="KW-0004">4Fe-4S</keyword>
<keyword id="KW-0963">Cytoplasm</keyword>
<keyword id="KW-0408">Iron</keyword>
<keyword id="KW-0411">Iron-sulfur</keyword>
<keyword id="KW-0479">Metal-binding</keyword>
<keyword id="KW-1185">Reference proteome</keyword>
<keyword id="KW-0949">S-adenosyl-L-methionine</keyword>
<keyword id="KW-0808">Transferase</keyword>